<organism>
    <name type="scientific">Prochlorococcus marinus (strain MIT 9215)</name>
    <dbReference type="NCBI Taxonomy" id="93060"/>
    <lineage>
        <taxon>Bacteria</taxon>
        <taxon>Bacillati</taxon>
        <taxon>Cyanobacteriota</taxon>
        <taxon>Cyanophyceae</taxon>
        <taxon>Synechococcales</taxon>
        <taxon>Prochlorococcaceae</taxon>
        <taxon>Prochlorococcus</taxon>
    </lineage>
</organism>
<feature type="chain" id="PRO_0000353706" description="Cytochrome c biogenesis protein CcsA">
    <location>
        <begin position="1"/>
        <end position="309"/>
    </location>
</feature>
<feature type="transmembrane region" description="Helical" evidence="2">
    <location>
        <begin position="18"/>
        <end position="38"/>
    </location>
</feature>
<feature type="transmembrane region" description="Helical" evidence="2">
    <location>
        <begin position="43"/>
        <end position="63"/>
    </location>
</feature>
<feature type="transmembrane region" description="Helical" evidence="2">
    <location>
        <begin position="67"/>
        <end position="87"/>
    </location>
</feature>
<feature type="transmembrane region" description="Helical" evidence="2">
    <location>
        <begin position="102"/>
        <end position="122"/>
    </location>
</feature>
<feature type="transmembrane region" description="Helical" evidence="2">
    <location>
        <begin position="148"/>
        <end position="168"/>
    </location>
</feature>
<feature type="transmembrane region" description="Helical" evidence="2">
    <location>
        <begin position="216"/>
        <end position="236"/>
    </location>
</feature>
<feature type="transmembrane region" description="Helical" evidence="2">
    <location>
        <begin position="250"/>
        <end position="267"/>
    </location>
</feature>
<feature type="transmembrane region" description="Helical" evidence="2">
    <location>
        <begin position="279"/>
        <end position="299"/>
    </location>
</feature>
<dbReference type="EMBL" id="CP000825">
    <property type="protein sequence ID" value="ABV50474.1"/>
    <property type="molecule type" value="Genomic_DNA"/>
</dbReference>
<dbReference type="RefSeq" id="WP_012007574.1">
    <property type="nucleotide sequence ID" value="NC_009840.1"/>
</dbReference>
<dbReference type="SMR" id="A8G4E3"/>
<dbReference type="STRING" id="93060.P9215_08591"/>
<dbReference type="KEGG" id="pmh:P9215_08591"/>
<dbReference type="eggNOG" id="COG0755">
    <property type="taxonomic scope" value="Bacteria"/>
</dbReference>
<dbReference type="HOGENOM" id="CLU_049710_2_4_3"/>
<dbReference type="OrthoDB" id="9814290at2"/>
<dbReference type="Proteomes" id="UP000002014">
    <property type="component" value="Chromosome"/>
</dbReference>
<dbReference type="GO" id="GO:0031676">
    <property type="term" value="C:plasma membrane-derived thylakoid membrane"/>
    <property type="evidence" value="ECO:0007669"/>
    <property type="project" value="UniProtKB-SubCell"/>
</dbReference>
<dbReference type="GO" id="GO:0020037">
    <property type="term" value="F:heme binding"/>
    <property type="evidence" value="ECO:0007669"/>
    <property type="project" value="InterPro"/>
</dbReference>
<dbReference type="GO" id="GO:0017004">
    <property type="term" value="P:cytochrome complex assembly"/>
    <property type="evidence" value="ECO:0007669"/>
    <property type="project" value="UniProtKB-UniRule"/>
</dbReference>
<dbReference type="HAMAP" id="MF_01391">
    <property type="entry name" value="CytC_CcsA"/>
    <property type="match status" value="1"/>
</dbReference>
<dbReference type="InterPro" id="IPR002541">
    <property type="entry name" value="Cyt_c_assembly"/>
</dbReference>
<dbReference type="InterPro" id="IPR017562">
    <property type="entry name" value="Cyt_c_biogenesis_CcsA"/>
</dbReference>
<dbReference type="InterPro" id="IPR045062">
    <property type="entry name" value="Cyt_c_biogenesis_CcsA/CcmC"/>
</dbReference>
<dbReference type="NCBIfam" id="TIGR03144">
    <property type="entry name" value="cytochr_II_ccsB"/>
    <property type="match status" value="1"/>
</dbReference>
<dbReference type="PANTHER" id="PTHR30071:SF1">
    <property type="entry name" value="CYTOCHROME B_B6 PROTEIN-RELATED"/>
    <property type="match status" value="1"/>
</dbReference>
<dbReference type="PANTHER" id="PTHR30071">
    <property type="entry name" value="HEME EXPORTER PROTEIN C"/>
    <property type="match status" value="1"/>
</dbReference>
<dbReference type="Pfam" id="PF01578">
    <property type="entry name" value="Cytochrom_C_asm"/>
    <property type="match status" value="1"/>
</dbReference>
<gene>
    <name evidence="2" type="primary">ccsA</name>
    <name type="ordered locus">P9215_08591</name>
</gene>
<name>CCSA_PROM2</name>
<keyword id="KW-0201">Cytochrome c-type biogenesis</keyword>
<keyword id="KW-0472">Membrane</keyword>
<keyword id="KW-0793">Thylakoid</keyword>
<keyword id="KW-0812">Transmembrane</keyword>
<keyword id="KW-1133">Transmembrane helix</keyword>
<evidence type="ECO:0000250" key="1"/>
<evidence type="ECO:0000255" key="2">
    <source>
        <dbReference type="HAMAP-Rule" id="MF_01391"/>
    </source>
</evidence>
<comment type="function">
    <text evidence="2">Required during biogenesis of c-type cytochromes (cytochrome c6 and cytochrome f) at the step of heme attachment.</text>
</comment>
<comment type="subunit">
    <text evidence="1">May interact with ccs1.</text>
</comment>
<comment type="subcellular location">
    <subcellularLocation>
        <location evidence="2">Cellular thylakoid membrane</location>
        <topology evidence="2">Multi-pass membrane protein</topology>
    </subcellularLocation>
</comment>
<comment type="similarity">
    <text evidence="2">Belongs to the CcmF/CycK/Ccl1/NrfE/CcsA family.</text>
</comment>
<reference key="1">
    <citation type="journal article" date="2007" name="PLoS Genet.">
        <title>Patterns and implications of gene gain and loss in the evolution of Prochlorococcus.</title>
        <authorList>
            <person name="Kettler G.C."/>
            <person name="Martiny A.C."/>
            <person name="Huang K."/>
            <person name="Zucker J."/>
            <person name="Coleman M.L."/>
            <person name="Rodrigue S."/>
            <person name="Chen F."/>
            <person name="Lapidus A."/>
            <person name="Ferriera S."/>
            <person name="Johnson J."/>
            <person name="Steglich C."/>
            <person name="Church G.M."/>
            <person name="Richardson P."/>
            <person name="Chisholm S.W."/>
        </authorList>
    </citation>
    <scope>NUCLEOTIDE SEQUENCE [LARGE SCALE GENOMIC DNA]</scope>
    <source>
        <strain>MIT 9215</strain>
    </source>
</reference>
<protein>
    <recommendedName>
        <fullName evidence="2">Cytochrome c biogenesis protein CcsA</fullName>
    </recommendedName>
</protein>
<sequence length="309" mass="34915">MILENLFKNLIYDPVSVLGLLVFYILLVNLPISLGAFFQKKSFFIVRVLTILINFLITLQLLFRWSISGHFPISNLYESLYFLTWGITMGQLLIEREYQSPIIPSIAIPIELLTVAFACFVLPDDLKISSNLVPALRSSWLVMHVSVVMLSYAALIIGSLLSASVLFINKNKPLQIRSSSTGIGGFKISNNYPLNELVEPIEFSHSEELDTLSYRSILIGFVLLTLGLISGAVWANEAWGTWWSWDPKETWAFISWMFYAAYLHMRISKGWQGRRPALLATTGFLVVLICYLGVNFLGIGLHSYGWIFG</sequence>
<accession>A8G4E3</accession>
<proteinExistence type="inferred from homology"/>